<accession>Q7ZTU9</accession>
<accession>Q9IAL0</accession>
<accession>Q9W7B7</accession>
<dbReference type="EMBL" id="AF179405">
    <property type="protein sequence ID" value="AAF59835.1"/>
    <property type="molecule type" value="mRNA"/>
</dbReference>
<dbReference type="EMBL" id="BC051603">
    <property type="protein sequence ID" value="AAH51603.2"/>
    <property type="molecule type" value="mRNA"/>
</dbReference>
<dbReference type="EMBL" id="AF136946">
    <property type="protein sequence ID" value="AAD44194.1"/>
    <property type="status" value="ALT_FRAME"/>
    <property type="molecule type" value="mRNA"/>
</dbReference>
<dbReference type="RefSeq" id="NP_571126.1">
    <property type="nucleotide sequence ID" value="NM_131051.1"/>
</dbReference>
<dbReference type="SMR" id="Q7ZTU9"/>
<dbReference type="FunCoup" id="Q7ZTU9">
    <property type="interactions" value="790"/>
</dbReference>
<dbReference type="STRING" id="7955.ENSDARP00000107769"/>
<dbReference type="PaxDb" id="7955-ENSDARP00000107769"/>
<dbReference type="DNASU" id="30253"/>
<dbReference type="Ensembl" id="ENSDART00000005491">
    <property type="protein sequence ID" value="ENSDARP00000020624"/>
    <property type="gene ID" value="ENSDARG00000116135"/>
</dbReference>
<dbReference type="Ensembl" id="ENSDART00000122101">
    <property type="protein sequence ID" value="ENSDARP00000107769"/>
    <property type="gene ID" value="ENSDARG00000006120"/>
</dbReference>
<dbReference type="GeneID" id="30253"/>
<dbReference type="KEGG" id="dre:30253"/>
<dbReference type="AGR" id="ZFIN:ZDB-GENE-990726-27"/>
<dbReference type="CTD" id="30253"/>
<dbReference type="ZFIN" id="ZDB-GENE-990726-27">
    <property type="gene designation" value="tbx2b"/>
</dbReference>
<dbReference type="eggNOG" id="KOG3585">
    <property type="taxonomic scope" value="Eukaryota"/>
</dbReference>
<dbReference type="HOGENOM" id="CLU_023038_1_0_1"/>
<dbReference type="InParanoid" id="Q7ZTU9"/>
<dbReference type="OMA" id="EQCKPER"/>
<dbReference type="OrthoDB" id="7442607at2759"/>
<dbReference type="PhylomeDB" id="Q7ZTU9"/>
<dbReference type="TreeFam" id="TF106341"/>
<dbReference type="PRO" id="PR:Q7ZTU9"/>
<dbReference type="Proteomes" id="UP000000437">
    <property type="component" value="Alternate scaffold 15"/>
</dbReference>
<dbReference type="Proteomes" id="UP000000437">
    <property type="component" value="Chromosome 15"/>
</dbReference>
<dbReference type="Bgee" id="ENSDARG00000006120">
    <property type="expression patterns" value="Expressed in camera-type eye and 19 other cell types or tissues"/>
</dbReference>
<dbReference type="GO" id="GO:0000785">
    <property type="term" value="C:chromatin"/>
    <property type="evidence" value="ECO:0000318"/>
    <property type="project" value="GO_Central"/>
</dbReference>
<dbReference type="GO" id="GO:0005634">
    <property type="term" value="C:nucleus"/>
    <property type="evidence" value="ECO:0000318"/>
    <property type="project" value="GO_Central"/>
</dbReference>
<dbReference type="GO" id="GO:0000981">
    <property type="term" value="F:DNA-binding transcription factor activity, RNA polymerase II-specific"/>
    <property type="evidence" value="ECO:0000318"/>
    <property type="project" value="GO_Central"/>
</dbReference>
<dbReference type="GO" id="GO:0000978">
    <property type="term" value="F:RNA polymerase II cis-regulatory region sequence-specific DNA binding"/>
    <property type="evidence" value="ECO:0000318"/>
    <property type="project" value="GO_Central"/>
</dbReference>
<dbReference type="GO" id="GO:0036302">
    <property type="term" value="P:atrioventricular canal development"/>
    <property type="evidence" value="ECO:0000316"/>
    <property type="project" value="ZFIN"/>
</dbReference>
<dbReference type="GO" id="GO:0048318">
    <property type="term" value="P:axial mesoderm development"/>
    <property type="evidence" value="ECO:0000314"/>
    <property type="project" value="ZFIN"/>
</dbReference>
<dbReference type="GO" id="GO:0030509">
    <property type="term" value="P:BMP signaling pathway"/>
    <property type="evidence" value="ECO:0000315"/>
    <property type="project" value="ZFIN"/>
</dbReference>
<dbReference type="GO" id="GO:0007420">
    <property type="term" value="P:brain development"/>
    <property type="evidence" value="ECO:0000315"/>
    <property type="project" value="ZFIN"/>
</dbReference>
<dbReference type="GO" id="GO:0060219">
    <property type="term" value="P:camera-type eye photoreceptor cell differentiation"/>
    <property type="evidence" value="ECO:0000315"/>
    <property type="project" value="ZFIN"/>
</dbReference>
<dbReference type="GO" id="GO:0003205">
    <property type="term" value="P:cardiac chamber development"/>
    <property type="evidence" value="ECO:0000316"/>
    <property type="project" value="ZFIN"/>
</dbReference>
<dbReference type="GO" id="GO:0007155">
    <property type="term" value="P:cell adhesion"/>
    <property type="evidence" value="ECO:0000315"/>
    <property type="project" value="ZFIN"/>
</dbReference>
<dbReference type="GO" id="GO:0001708">
    <property type="term" value="P:cell fate specification"/>
    <property type="evidence" value="ECO:0000318"/>
    <property type="project" value="GO_Central"/>
</dbReference>
<dbReference type="GO" id="GO:0042074">
    <property type="term" value="P:cell migration involved in gastrulation"/>
    <property type="evidence" value="ECO:0000315"/>
    <property type="project" value="ZFIN"/>
</dbReference>
<dbReference type="GO" id="GO:0035050">
    <property type="term" value="P:embryonic heart tube development"/>
    <property type="evidence" value="ECO:0000315"/>
    <property type="project" value="ZFIN"/>
</dbReference>
<dbReference type="GO" id="GO:0021538">
    <property type="term" value="P:epithalamus development"/>
    <property type="evidence" value="ECO:0000315"/>
    <property type="project" value="ZFIN"/>
</dbReference>
<dbReference type="GO" id="GO:0001702">
    <property type="term" value="P:gastrulation with mouth forming second"/>
    <property type="evidence" value="ECO:0007669"/>
    <property type="project" value="Ensembl"/>
</dbReference>
<dbReference type="GO" id="GO:0001947">
    <property type="term" value="P:heart looping"/>
    <property type="evidence" value="ECO:0000315"/>
    <property type="project" value="ZFIN"/>
</dbReference>
<dbReference type="GO" id="GO:0070365">
    <property type="term" value="P:hepatocyte differentiation"/>
    <property type="evidence" value="ECO:0000315"/>
    <property type="project" value="ZFIN"/>
</dbReference>
<dbReference type="GO" id="GO:0072068">
    <property type="term" value="P:late distal convoluted tubule development"/>
    <property type="evidence" value="ECO:0000315"/>
    <property type="project" value="ZFIN"/>
</dbReference>
<dbReference type="GO" id="GO:0048663">
    <property type="term" value="P:neuron fate commitment"/>
    <property type="evidence" value="ECO:0000315"/>
    <property type="project" value="ZFIN"/>
</dbReference>
<dbReference type="GO" id="GO:0030903">
    <property type="term" value="P:notochord development"/>
    <property type="evidence" value="ECO:0000315"/>
    <property type="project" value="ZFIN"/>
</dbReference>
<dbReference type="GO" id="GO:0042461">
    <property type="term" value="P:photoreceptor cell development"/>
    <property type="evidence" value="ECO:0000315"/>
    <property type="project" value="ZFIN"/>
</dbReference>
<dbReference type="GO" id="GO:0043704">
    <property type="term" value="P:photoreceptor cell fate specification"/>
    <property type="evidence" value="ECO:0000315"/>
    <property type="project" value="ZFIN"/>
</dbReference>
<dbReference type="GO" id="GO:0021982">
    <property type="term" value="P:pineal gland development"/>
    <property type="evidence" value="ECO:0000315"/>
    <property type="project" value="ZFIN"/>
</dbReference>
<dbReference type="GO" id="GO:0045893">
    <property type="term" value="P:positive regulation of DNA-templated transcription"/>
    <property type="evidence" value="ECO:0007669"/>
    <property type="project" value="InterPro"/>
</dbReference>
<dbReference type="GO" id="GO:0035777">
    <property type="term" value="P:pronephric distal tubule development"/>
    <property type="evidence" value="ECO:0000315"/>
    <property type="project" value="ZFIN"/>
</dbReference>
<dbReference type="GO" id="GO:0048793">
    <property type="term" value="P:pronephros development"/>
    <property type="evidence" value="ECO:0000315"/>
    <property type="project" value="ZFIN"/>
</dbReference>
<dbReference type="GO" id="GO:0072019">
    <property type="term" value="P:proximal convoluted tubule development"/>
    <property type="evidence" value="ECO:0000315"/>
    <property type="project" value="ZFIN"/>
</dbReference>
<dbReference type="GO" id="GO:0008016">
    <property type="term" value="P:regulation of heart contraction"/>
    <property type="evidence" value="ECO:0000315"/>
    <property type="project" value="ZFIN"/>
</dbReference>
<dbReference type="GO" id="GO:0006357">
    <property type="term" value="P:regulation of transcription by RNA polymerase II"/>
    <property type="evidence" value="ECO:0000318"/>
    <property type="project" value="GO_Central"/>
</dbReference>
<dbReference type="GO" id="GO:0046549">
    <property type="term" value="P:retinal cone cell development"/>
    <property type="evidence" value="ECO:0000315"/>
    <property type="project" value="ZFIN"/>
</dbReference>
<dbReference type="GO" id="GO:0046551">
    <property type="term" value="P:retinal cone cell fate commitment"/>
    <property type="evidence" value="ECO:0000315"/>
    <property type="project" value="ZFIN"/>
</dbReference>
<dbReference type="GO" id="GO:0042671">
    <property type="term" value="P:retinal cone cell fate determination"/>
    <property type="evidence" value="ECO:0000315"/>
    <property type="project" value="ZFIN"/>
</dbReference>
<dbReference type="GO" id="GO:0046548">
    <property type="term" value="P:retinal rod cell development"/>
    <property type="evidence" value="ECO:0000315"/>
    <property type="project" value="ZFIN"/>
</dbReference>
<dbReference type="CDD" id="cd20188">
    <property type="entry name" value="T-box_TBX2_3-like"/>
    <property type="match status" value="1"/>
</dbReference>
<dbReference type="FunFam" id="2.60.40.820:FF:000003">
    <property type="entry name" value="T-box transcription factor TBX3"/>
    <property type="match status" value="1"/>
</dbReference>
<dbReference type="Gene3D" id="2.60.40.820">
    <property type="entry name" value="Transcription factor, T-box"/>
    <property type="match status" value="1"/>
</dbReference>
<dbReference type="InterPro" id="IPR008967">
    <property type="entry name" value="p53-like_TF_DNA-bd_sf"/>
</dbReference>
<dbReference type="InterPro" id="IPR046360">
    <property type="entry name" value="T-box_DNA-bd"/>
</dbReference>
<dbReference type="InterPro" id="IPR036960">
    <property type="entry name" value="T-box_sf"/>
</dbReference>
<dbReference type="InterPro" id="IPR022582">
    <property type="entry name" value="TBX2/3_TAD"/>
</dbReference>
<dbReference type="InterPro" id="IPR048387">
    <property type="entry name" value="TBX2_3_RD"/>
</dbReference>
<dbReference type="InterPro" id="IPR002070">
    <property type="entry name" value="TF_Brachyury"/>
</dbReference>
<dbReference type="InterPro" id="IPR001699">
    <property type="entry name" value="TF_T-box"/>
</dbReference>
<dbReference type="InterPro" id="IPR018186">
    <property type="entry name" value="TF_T-box_CS"/>
</dbReference>
<dbReference type="PANTHER" id="PTHR11267">
    <property type="entry name" value="T-BOX PROTEIN-RELATED"/>
    <property type="match status" value="1"/>
</dbReference>
<dbReference type="PANTHER" id="PTHR11267:SF82">
    <property type="entry name" value="T-BOX TRANSCRIPTION FACTOR TBX2"/>
    <property type="match status" value="1"/>
</dbReference>
<dbReference type="Pfam" id="PF00907">
    <property type="entry name" value="T-box"/>
    <property type="match status" value="1"/>
</dbReference>
<dbReference type="Pfam" id="PF20627">
    <property type="entry name" value="TBX2-3_RD"/>
    <property type="match status" value="1"/>
</dbReference>
<dbReference type="Pfam" id="PF12598">
    <property type="entry name" value="TBX2-3_TAD"/>
    <property type="match status" value="1"/>
</dbReference>
<dbReference type="PRINTS" id="PR00938">
    <property type="entry name" value="BRACHYURY"/>
</dbReference>
<dbReference type="PRINTS" id="PR00937">
    <property type="entry name" value="TBOX"/>
</dbReference>
<dbReference type="SMART" id="SM00425">
    <property type="entry name" value="TBOX"/>
    <property type="match status" value="1"/>
</dbReference>
<dbReference type="SUPFAM" id="SSF49417">
    <property type="entry name" value="p53-like transcription factors"/>
    <property type="match status" value="1"/>
</dbReference>
<dbReference type="PROSITE" id="PS01283">
    <property type="entry name" value="TBOX_1"/>
    <property type="match status" value="1"/>
</dbReference>
<dbReference type="PROSITE" id="PS01264">
    <property type="entry name" value="TBOX_2"/>
    <property type="match status" value="1"/>
</dbReference>
<dbReference type="PROSITE" id="PS50252">
    <property type="entry name" value="TBOX_3"/>
    <property type="match status" value="1"/>
</dbReference>
<feature type="chain" id="PRO_0000262463" description="T-box transcription factor TBX2b">
    <location>
        <begin position="1"/>
        <end position="687"/>
    </location>
</feature>
<feature type="DNA-binding region" description="T-box" evidence="4">
    <location>
        <begin position="103"/>
        <end position="276"/>
    </location>
</feature>
<feature type="region of interest" description="Disordered" evidence="5">
    <location>
        <begin position="303"/>
        <end position="452"/>
    </location>
</feature>
<feature type="region of interest" description="Disordered" evidence="5">
    <location>
        <begin position="611"/>
        <end position="687"/>
    </location>
</feature>
<feature type="coiled-coil region" evidence="3">
    <location>
        <begin position="654"/>
        <end position="681"/>
    </location>
</feature>
<feature type="compositionally biased region" description="Basic and acidic residues" evidence="5">
    <location>
        <begin position="338"/>
        <end position="357"/>
    </location>
</feature>
<feature type="compositionally biased region" description="Basic and acidic residues" evidence="5">
    <location>
        <begin position="375"/>
        <end position="400"/>
    </location>
</feature>
<feature type="compositionally biased region" description="Basic and acidic residues" evidence="5">
    <location>
        <begin position="408"/>
        <end position="430"/>
    </location>
</feature>
<feature type="compositionally biased region" description="Polar residues" evidence="5">
    <location>
        <begin position="431"/>
        <end position="451"/>
    </location>
</feature>
<feature type="compositionally biased region" description="Polar residues" evidence="5">
    <location>
        <begin position="611"/>
        <end position="630"/>
    </location>
</feature>
<feature type="compositionally biased region" description="Polar residues" evidence="5">
    <location>
        <begin position="644"/>
        <end position="654"/>
    </location>
</feature>
<feature type="compositionally biased region" description="Basic and acidic residues" evidence="5">
    <location>
        <begin position="675"/>
        <end position="687"/>
    </location>
</feature>
<feature type="sequence conflict" description="In Ref. 1; AAF59835." evidence="9" ref="1">
    <original>E</original>
    <variation>K</variation>
    <location>
        <position position="368"/>
    </location>
</feature>
<sequence>MRDPVFTGTAMAYHPFHAHRPTDFPMSAFLAAAQPSFFPALTLPPGALTKPIPDHTLAGAAEAGLHPALSHHHQAAHLRSLKSLEPEEEVEDDPKVTLEAKDLWDQFHKLGTEMVITKSGRRMFPPFKVRINGLDKKAKYILLMDIVAADDCRYKFHNSRWMVAGKADPEMPKRMYIHPDSPATGEQWMAKPVAFHKLKLTNNISDKHGFTILNSMHKYQPRFHIVRANDILKLPYSTFRTYVFPETDFIAVTAYQNDKITQLKIDNNPFAKGFRDTGNGRREKRKQLTLPSLRMYEDQCKVDRDGADSDASSSEPTTGRDAGHSPGPVSSPLRFNRGSRDDKTCTDSEHEMDHQNDRCGGSSSPAPEPSSPFRSRSEDWGREKPIAEKKDDYPDSRKTSDSIFSIRNLEKDKLESRSRKDTDSSKKDTENSGISGSKDSFSPLMVQTESPSHFGAGHLQSLALSGLHSQQFFNPLNTGQPLLFHPGQFAMAPGAFSAMGMGHLLASVSGAGGLENGSLSAQGTGSTPSPFPFHLSQHMLASQGIPMPTFGGLFPYPYTYMAAAAAAASALPASSSTASSLSRNPFLSSSTRPRLRFNPYQLPVSIPQSTNLLTTGLPSGLNPSSESSKCGSREASPVPDHKSGASQRNGSPKTTMKESINELQNIQRLVSGLESQRETSSPRDSPK</sequence>
<gene>
    <name type="primary">tbx2b</name>
    <name type="synonym">tbx-c</name>
</gene>
<proteinExistence type="evidence at protein level"/>
<protein>
    <recommendedName>
        <fullName>T-box transcription factor TBX2b</fullName>
        <shortName>T-box protein 2b</shortName>
    </recommendedName>
</protein>
<keyword id="KW-0175">Coiled coil</keyword>
<keyword id="KW-0217">Developmental protein</keyword>
<keyword id="KW-0238">DNA-binding</keyword>
<keyword id="KW-0539">Nucleus</keyword>
<keyword id="KW-1185">Reference proteome</keyword>
<keyword id="KW-0804">Transcription</keyword>
<keyword id="KW-0805">Transcription regulation</keyword>
<comment type="function">
    <text evidence="1 2 6 8">Transcription factor which acts as a transcriptional repressor (By similarity). May also function as a transcriptional activator (By similarity). Binds to the palindromic T site 5'-TTCACACCTAGGTGTGAA-3' DNA sequence, or a half-site, which are present in the regulatory region of several genes (By similarity). Involved in the transcriptional regulation of genes required for mesoderm differentiation. Plays a role in the specification of late notochordal precursor cells and formation of the differentiated notochord. Required for cardiac atrioventricular canal formation.</text>
</comment>
<comment type="subunit">
    <text evidence="1">Binds DNA as a monomer.</text>
</comment>
<comment type="subcellular location">
    <subcellularLocation>
        <location evidence="1">Nucleus</location>
    </subcellularLocation>
</comment>
<comment type="tissue specificity">
    <text evidence="6">Expressed in the axial mesoderm, notably, in the notochordal precursor cells immediately before formation of the notochord and in the chordoneural hinge of the tail bud, after the notochord is formed. In addition, its expression is detected in the ventral forebrain, sensory neurons, fin buds and excretory system.</text>
</comment>
<comment type="developmental stage">
    <text evidence="6 7">Expression seen in many tissues of ectodermal and mesodermal origin during embryogenesis. First detected at bud stage in the ventral prosencephalon and along the length of the notochord. As segmentation proceeds, expressed in the optic primordia, otic placodes and diffusely in cells over the yolk lying ventrally to the tail bud. Midway through the segmentation period, expression also seen in the acostic and lateral line sensory ganglia. At 22 hpf, found in the most posterior portion of the pronephric ducts (PubMed:10664151). At the end of gastrulation, expression seen in the prospective ventral forebrain, single eye field and the presumptive notochord. At 12 hpf, expression in the midline found only at the posterior end of the notochord where it can be detected until the end of segmentation. At 20 hpf, expression in the eye is restricted to the dorsal retina and also found in the epiphysis, otic vesicles and sensory neurons of cranial ganglia. At 22 hpf, expressed in bud of pectoral fins and at 30 hpf, in a subset of interneurons in the anterior spinal cord (PubMed:10331981).</text>
</comment>
<comment type="disruption phenotype">
    <text evidence="8">Loss of atrioventricular canal formation and cardiac looping.</text>
</comment>
<comment type="sequence caution" evidence="9">
    <conflict type="frameshift">
        <sequence resource="EMBL-CDS" id="AAD44194"/>
    </conflict>
</comment>
<organism>
    <name type="scientific">Danio rerio</name>
    <name type="common">Zebrafish</name>
    <name type="synonym">Brachydanio rerio</name>
    <dbReference type="NCBI Taxonomy" id="7955"/>
    <lineage>
        <taxon>Eukaryota</taxon>
        <taxon>Metazoa</taxon>
        <taxon>Chordata</taxon>
        <taxon>Craniata</taxon>
        <taxon>Vertebrata</taxon>
        <taxon>Euteleostomi</taxon>
        <taxon>Actinopterygii</taxon>
        <taxon>Neopterygii</taxon>
        <taxon>Teleostei</taxon>
        <taxon>Ostariophysi</taxon>
        <taxon>Cypriniformes</taxon>
        <taxon>Danionidae</taxon>
        <taxon>Danioninae</taxon>
        <taxon>Danio</taxon>
    </lineage>
</organism>
<name>TBX2_DANRE</name>
<reference key="1">
    <citation type="journal article" date="2000" name="Dev. Genes Evol.">
        <title>The evolution of paired appendages in vertebrates: T-box genes in the zebrafish.</title>
        <authorList>
            <person name="Ruvinsky I."/>
            <person name="Oates A.C."/>
            <person name="Silver L.M."/>
            <person name="Ho R.K."/>
        </authorList>
    </citation>
    <scope>NUCLEOTIDE SEQUENCE [MRNA]</scope>
    <scope>DEVELOPMENTAL STAGE</scope>
</reference>
<reference key="2">
    <citation type="submission" date="2003-04" db="EMBL/GenBank/DDBJ databases">
        <authorList>
            <consortium name="NIH - Zebrafish Gene Collection (ZGC) project"/>
        </authorList>
    </citation>
    <scope>NUCLEOTIDE SEQUENCE [LARGE SCALE MRNA]</scope>
    <source>
        <strain>SJD</strain>
    </source>
</reference>
<reference key="3">
    <citation type="journal article" date="1999" name="Development">
        <title>Zebrafish tbx-c functions during formation of midline structures.</title>
        <authorList>
            <person name="Dheen T."/>
            <person name="Sleptsova-Friedrich I."/>
            <person name="Xu Y."/>
            <person name="Clark M."/>
            <person name="Lehrach H."/>
            <person name="Gong Z."/>
            <person name="Korzh V."/>
        </authorList>
    </citation>
    <scope>NUCLEOTIDE SEQUENCE [MRNA] OF 10-682</scope>
    <scope>FUNCTION</scope>
    <scope>TISSUE SPECIFICITY</scope>
    <scope>DEVELOPMENTAL STAGE</scope>
</reference>
<reference key="4">
    <citation type="journal article" date="2008" name="Genes Dev.">
        <title>Foxn4 directly regulates tbx2b expression and atrioventricular canal formation.</title>
        <authorList>
            <person name="Chi N.C."/>
            <person name="Shaw R.M."/>
            <person name="De Val S."/>
            <person name="Kang G."/>
            <person name="Jan L.Y."/>
            <person name="Black B.L."/>
            <person name="Stainier D.Y."/>
        </authorList>
    </citation>
    <scope>FUNCTION IN HEART DEVELOPMENT</scope>
    <scope>DISRUPTION PHENOTYPE</scope>
</reference>
<evidence type="ECO:0000250" key="1">
    <source>
        <dbReference type="UniProtKB" id="Q13207"/>
    </source>
</evidence>
<evidence type="ECO:0000250" key="2">
    <source>
        <dbReference type="UniProtKB" id="Q60707"/>
    </source>
</evidence>
<evidence type="ECO:0000255" key="3"/>
<evidence type="ECO:0000255" key="4">
    <source>
        <dbReference type="PROSITE-ProRule" id="PRU00201"/>
    </source>
</evidence>
<evidence type="ECO:0000256" key="5">
    <source>
        <dbReference type="SAM" id="MobiDB-lite"/>
    </source>
</evidence>
<evidence type="ECO:0000269" key="6">
    <source>
    </source>
</evidence>
<evidence type="ECO:0000269" key="7">
    <source>
    </source>
</evidence>
<evidence type="ECO:0000269" key="8">
    <source>
    </source>
</evidence>
<evidence type="ECO:0000305" key="9"/>